<sequence length="16" mass="1499">LSAGPNGGSIAKLSVK</sequence>
<reference key="1">
    <citation type="journal article" date="2008" name="J. Proteomics">
        <title>A proteomics approach to identify proteins differentially expressed in Douglas-fir seedlings infected by Phellinus sulphurascens.</title>
        <authorList>
            <person name="Islam M.A."/>
            <person name="Sturrock R.N."/>
            <person name="Ekramoddoullah A.K.M."/>
        </authorList>
    </citation>
    <scope>IDENTIFICATION BY MASS SPECTROMETRY</scope>
</reference>
<organism>
    <name type="scientific">Pseudotsuga menziesii</name>
    <name type="common">Douglas-fir</name>
    <name type="synonym">Abies menziesii</name>
    <dbReference type="NCBI Taxonomy" id="3357"/>
    <lineage>
        <taxon>Eukaryota</taxon>
        <taxon>Viridiplantae</taxon>
        <taxon>Streptophyta</taxon>
        <taxon>Embryophyta</taxon>
        <taxon>Tracheophyta</taxon>
        <taxon>Spermatophyta</taxon>
        <taxon>Pinopsida</taxon>
        <taxon>Pinidae</taxon>
        <taxon>Conifers I</taxon>
        <taxon>Pinales</taxon>
        <taxon>Pinaceae</taxon>
        <taxon>Pseudotsuga</taxon>
    </lineage>
</organism>
<feature type="chain" id="PRO_0000392516" description="Disease resistance response protein">
    <location>
        <begin position="1" status="less than"/>
        <end position="16" status="greater than"/>
    </location>
</feature>
<feature type="non-terminal residue" evidence="3">
    <location>
        <position position="1"/>
    </location>
</feature>
<feature type="non-terminal residue" evidence="3">
    <location>
        <position position="16"/>
    </location>
</feature>
<protein>
    <recommendedName>
        <fullName evidence="1">Disease resistance response protein</fullName>
    </recommendedName>
</protein>
<evidence type="ECO:0000250" key="1">
    <source>
        <dbReference type="UniProtKB" id="P14710"/>
    </source>
</evidence>
<evidence type="ECO:0000255" key="2"/>
<evidence type="ECO:0000303" key="3">
    <source>
    </source>
</evidence>
<name>DRR_PSEMZ</name>
<accession>P85900</accession>
<comment type="similarity">
    <text evidence="2">Belongs to the BetVI family.</text>
</comment>
<dbReference type="GO" id="GO:0006952">
    <property type="term" value="P:defense response"/>
    <property type="evidence" value="ECO:0007669"/>
    <property type="project" value="UniProtKB-KW"/>
</dbReference>
<keyword id="KW-0568">Pathogenesis-related protein</keyword>
<keyword id="KW-0611">Plant defense</keyword>
<proteinExistence type="evidence at protein level"/>